<sequence>MGTEGKAGRKLLFLFTSMILGSLVQGKGSVYTAQSDVQVPENESIKLTCTYSGFSSPRVEWKFVQGSTTALVCYNSQITAPYADRVTFSSSGITFSSVTRKDNGEYTCMVSEEGGQNYGEVSIHLTVLVPPSKPTISVPSSVTIGNRAVLTCSEHDGSPPSEYSWFKDGISMLTADAKKTRAFMNSSFTIDPKSGDLIFDPVTAFDSGEYYCQAQNGYGTAMRSEAAHMDAVELNVGGIVAAVLVTLILLGLLIFGVWFAYSRGYFERTKKGTAPGKKVIYSQPSTRSEGEFKQTSSFLV</sequence>
<dbReference type="EMBL" id="U89915">
    <property type="protein sequence ID" value="AAC32982.1"/>
    <property type="molecule type" value="mRNA"/>
</dbReference>
<dbReference type="EMBL" id="AK033574">
    <property type="protein sequence ID" value="BAC28369.1"/>
    <property type="molecule type" value="mRNA"/>
</dbReference>
<dbReference type="EMBL" id="CT010347">
    <property type="protein sequence ID" value="CAJ18555.1"/>
    <property type="molecule type" value="mRNA"/>
</dbReference>
<dbReference type="EMBL" id="AC087229">
    <property type="status" value="NOT_ANNOTATED_CDS"/>
    <property type="molecule type" value="Genomic_DNA"/>
</dbReference>
<dbReference type="EMBL" id="BC021876">
    <property type="protein sequence ID" value="AAH21876.1"/>
    <property type="molecule type" value="mRNA"/>
</dbReference>
<dbReference type="CCDS" id="CCDS15496.1"/>
<dbReference type="RefSeq" id="NP_766235.1">
    <property type="nucleotide sequence ID" value="NM_172647.2"/>
</dbReference>
<dbReference type="PDB" id="1F97">
    <property type="method" value="X-ray"/>
    <property type="resolution" value="2.50 A"/>
    <property type="chains" value="A=27-238"/>
</dbReference>
<dbReference type="PDBsum" id="1F97"/>
<dbReference type="SMR" id="O88792"/>
<dbReference type="BioGRID" id="200861">
    <property type="interactions" value="2"/>
</dbReference>
<dbReference type="DIP" id="DIP-41166N"/>
<dbReference type="FunCoup" id="O88792">
    <property type="interactions" value="368"/>
</dbReference>
<dbReference type="IntAct" id="O88792">
    <property type="interactions" value="3"/>
</dbReference>
<dbReference type="MINT" id="O88792"/>
<dbReference type="STRING" id="10090.ENSMUSP00000041907"/>
<dbReference type="GlyCosmos" id="O88792">
    <property type="glycosylation" value="2 sites, No reported glycans"/>
</dbReference>
<dbReference type="GlyGen" id="O88792">
    <property type="glycosylation" value="3 sites, 2 N-linked glycans (2 sites), 1 O-linked glycan (1 site)"/>
</dbReference>
<dbReference type="iPTMnet" id="O88792"/>
<dbReference type="PhosphoSitePlus" id="O88792"/>
<dbReference type="SwissPalm" id="O88792"/>
<dbReference type="jPOST" id="O88792"/>
<dbReference type="PaxDb" id="10090-ENSMUSP00000041907"/>
<dbReference type="PeptideAtlas" id="O88792"/>
<dbReference type="ProteomicsDB" id="269026"/>
<dbReference type="ABCD" id="O88792">
    <property type="antibodies" value="32 sequenced antibodies"/>
</dbReference>
<dbReference type="Antibodypedia" id="3317">
    <property type="antibodies" value="684 antibodies from 46 providers"/>
</dbReference>
<dbReference type="DNASU" id="16456"/>
<dbReference type="Ensembl" id="ENSMUST00000043839.5">
    <property type="protein sequence ID" value="ENSMUSP00000041907.5"/>
    <property type="gene ID" value="ENSMUSG00000038235.5"/>
</dbReference>
<dbReference type="GeneID" id="16456"/>
<dbReference type="KEGG" id="mmu:16456"/>
<dbReference type="UCSC" id="uc007doo.1">
    <property type="organism name" value="mouse"/>
</dbReference>
<dbReference type="AGR" id="MGI:1321398"/>
<dbReference type="CTD" id="50848"/>
<dbReference type="MGI" id="MGI:1321398">
    <property type="gene designation" value="F11r"/>
</dbReference>
<dbReference type="VEuPathDB" id="HostDB:ENSMUSG00000038235"/>
<dbReference type="eggNOG" id="ENOG502QWVN">
    <property type="taxonomic scope" value="Eukaryota"/>
</dbReference>
<dbReference type="GeneTree" id="ENSGT00940000159186"/>
<dbReference type="HOGENOM" id="CLU_067351_0_0_1"/>
<dbReference type="InParanoid" id="O88792"/>
<dbReference type="OMA" id="VEWKFVH"/>
<dbReference type="OrthoDB" id="10031887at2759"/>
<dbReference type="PhylomeDB" id="O88792"/>
<dbReference type="TreeFam" id="TF331459"/>
<dbReference type="Reactome" id="R-MMU-202733">
    <property type="pathway name" value="Cell surface interactions at the vascular wall"/>
</dbReference>
<dbReference type="Reactome" id="R-MMU-216083">
    <property type="pathway name" value="Integrin cell surface interactions"/>
</dbReference>
<dbReference type="Reactome" id="R-MMU-2173791">
    <property type="pathway name" value="TGF-beta receptor signaling in EMT (epithelial to mesenchymal transition)"/>
</dbReference>
<dbReference type="Reactome" id="R-MMU-420029">
    <property type="pathway name" value="Tight junction interactions"/>
</dbReference>
<dbReference type="BioGRID-ORCS" id="16456">
    <property type="hits" value="4 hits in 77 CRISPR screens"/>
</dbReference>
<dbReference type="ChiTaRS" id="F11r">
    <property type="organism name" value="mouse"/>
</dbReference>
<dbReference type="EvolutionaryTrace" id="O88792"/>
<dbReference type="PRO" id="PR:O88792"/>
<dbReference type="Proteomes" id="UP000000589">
    <property type="component" value="Chromosome 1"/>
</dbReference>
<dbReference type="RNAct" id="O88792">
    <property type="molecule type" value="protein"/>
</dbReference>
<dbReference type="Bgee" id="ENSMUSG00000038235">
    <property type="expression patterns" value="Expressed in saccule of membranous labyrinth and 231 other cell types or tissues"/>
</dbReference>
<dbReference type="GO" id="GO:0005923">
    <property type="term" value="C:bicellular tight junction"/>
    <property type="evidence" value="ECO:0000315"/>
    <property type="project" value="MGI"/>
</dbReference>
<dbReference type="GO" id="GO:0005886">
    <property type="term" value="C:plasma membrane"/>
    <property type="evidence" value="ECO:0007669"/>
    <property type="project" value="UniProtKB-SubCell"/>
</dbReference>
<dbReference type="GO" id="GO:0032991">
    <property type="term" value="C:protein-containing complex"/>
    <property type="evidence" value="ECO:0007669"/>
    <property type="project" value="Ensembl"/>
</dbReference>
<dbReference type="GO" id="GO:0005178">
    <property type="term" value="F:integrin binding"/>
    <property type="evidence" value="ECO:0007669"/>
    <property type="project" value="Ensembl"/>
</dbReference>
<dbReference type="GO" id="GO:0030165">
    <property type="term" value="F:PDZ domain binding"/>
    <property type="evidence" value="ECO:0007669"/>
    <property type="project" value="Ensembl"/>
</dbReference>
<dbReference type="GO" id="GO:0042803">
    <property type="term" value="F:protein homodimerization activity"/>
    <property type="evidence" value="ECO:0007669"/>
    <property type="project" value="Ensembl"/>
</dbReference>
<dbReference type="GO" id="GO:0031032">
    <property type="term" value="P:actomyosin structure organization"/>
    <property type="evidence" value="ECO:0007669"/>
    <property type="project" value="Ensembl"/>
</dbReference>
<dbReference type="GO" id="GO:0007155">
    <property type="term" value="P:cell adhesion"/>
    <property type="evidence" value="ECO:0000314"/>
    <property type="project" value="MGI"/>
</dbReference>
<dbReference type="GO" id="GO:0071260">
    <property type="term" value="P:cellular response to mechanical stimulus"/>
    <property type="evidence" value="ECO:0007669"/>
    <property type="project" value="Ensembl"/>
</dbReference>
<dbReference type="GO" id="GO:0030855">
    <property type="term" value="P:epithelial cell differentiation"/>
    <property type="evidence" value="ECO:0000314"/>
    <property type="project" value="MGI"/>
</dbReference>
<dbReference type="GO" id="GO:0090557">
    <property type="term" value="P:establishment of endothelial intestinal barrier"/>
    <property type="evidence" value="ECO:0007669"/>
    <property type="project" value="Ensembl"/>
</dbReference>
<dbReference type="GO" id="GO:0050892">
    <property type="term" value="P:intestinal absorption"/>
    <property type="evidence" value="ECO:0000315"/>
    <property type="project" value="UniProtKB"/>
</dbReference>
<dbReference type="GO" id="GO:0007159">
    <property type="term" value="P:leukocyte cell-cell adhesion"/>
    <property type="evidence" value="ECO:0007669"/>
    <property type="project" value="Ensembl"/>
</dbReference>
<dbReference type="GO" id="GO:0035683">
    <property type="term" value="P:memory T cell extravasation"/>
    <property type="evidence" value="ECO:0007669"/>
    <property type="project" value="Ensembl"/>
</dbReference>
<dbReference type="GO" id="GO:0051497">
    <property type="term" value="P:negative regulation of stress fiber assembly"/>
    <property type="evidence" value="ECO:0007669"/>
    <property type="project" value="Ensembl"/>
</dbReference>
<dbReference type="GO" id="GO:1903142">
    <property type="term" value="P:positive regulation of establishment of endothelial barrier"/>
    <property type="evidence" value="ECO:0007669"/>
    <property type="project" value="Ensembl"/>
</dbReference>
<dbReference type="GO" id="GO:1901731">
    <property type="term" value="P:positive regulation of platelet aggregation"/>
    <property type="evidence" value="ECO:0007669"/>
    <property type="project" value="Ensembl"/>
</dbReference>
<dbReference type="GO" id="GO:0035025">
    <property type="term" value="P:positive regulation of Rho protein signal transduction"/>
    <property type="evidence" value="ECO:0007669"/>
    <property type="project" value="Ensembl"/>
</dbReference>
<dbReference type="GO" id="GO:1902396">
    <property type="term" value="P:protein localization to bicellular tight junction"/>
    <property type="evidence" value="ECO:0007669"/>
    <property type="project" value="Ensembl"/>
</dbReference>
<dbReference type="GO" id="GO:0072659">
    <property type="term" value="P:protein localization to plasma membrane"/>
    <property type="evidence" value="ECO:0007669"/>
    <property type="project" value="Ensembl"/>
</dbReference>
<dbReference type="GO" id="GO:2000810">
    <property type="term" value="P:regulation of bicellular tight junction assembly"/>
    <property type="evidence" value="ECO:0007669"/>
    <property type="project" value="Ensembl"/>
</dbReference>
<dbReference type="GO" id="GO:0008360">
    <property type="term" value="P:regulation of cell shape"/>
    <property type="evidence" value="ECO:0007669"/>
    <property type="project" value="Ensembl"/>
</dbReference>
<dbReference type="GO" id="GO:0001817">
    <property type="term" value="P:regulation of cytokine production"/>
    <property type="evidence" value="ECO:0000315"/>
    <property type="project" value="CACAO"/>
</dbReference>
<dbReference type="GO" id="GO:0090559">
    <property type="term" value="P:regulation of membrane permeability"/>
    <property type="evidence" value="ECO:0000315"/>
    <property type="project" value="UniProtKB"/>
</dbReference>
<dbReference type="FunFam" id="2.60.40.10:FF:000342">
    <property type="entry name" value="Junctional adhesion molecule A"/>
    <property type="match status" value="1"/>
</dbReference>
<dbReference type="FunFam" id="2.60.40.10:FF:000906">
    <property type="entry name" value="Junctional adhesion molecule A"/>
    <property type="match status" value="1"/>
</dbReference>
<dbReference type="Gene3D" id="2.60.40.10">
    <property type="entry name" value="Immunoglobulins"/>
    <property type="match status" value="2"/>
</dbReference>
<dbReference type="InterPro" id="IPR042456">
    <property type="entry name" value="F11R"/>
</dbReference>
<dbReference type="InterPro" id="IPR007110">
    <property type="entry name" value="Ig-like_dom"/>
</dbReference>
<dbReference type="InterPro" id="IPR036179">
    <property type="entry name" value="Ig-like_dom_sf"/>
</dbReference>
<dbReference type="InterPro" id="IPR013783">
    <property type="entry name" value="Ig-like_fold"/>
</dbReference>
<dbReference type="InterPro" id="IPR003599">
    <property type="entry name" value="Ig_sub"/>
</dbReference>
<dbReference type="InterPro" id="IPR003598">
    <property type="entry name" value="Ig_sub2"/>
</dbReference>
<dbReference type="InterPro" id="IPR013106">
    <property type="entry name" value="Ig_V-set"/>
</dbReference>
<dbReference type="PANTHER" id="PTHR45113">
    <property type="entry name" value="JUNCTIONAL ADHESION MOLECULE A"/>
    <property type="match status" value="1"/>
</dbReference>
<dbReference type="PANTHER" id="PTHR45113:SF1">
    <property type="entry name" value="JUNCTIONAL ADHESION MOLECULE A"/>
    <property type="match status" value="1"/>
</dbReference>
<dbReference type="Pfam" id="PF13927">
    <property type="entry name" value="Ig_3"/>
    <property type="match status" value="1"/>
</dbReference>
<dbReference type="Pfam" id="PF07686">
    <property type="entry name" value="V-set"/>
    <property type="match status" value="1"/>
</dbReference>
<dbReference type="SMART" id="SM00409">
    <property type="entry name" value="IG"/>
    <property type="match status" value="2"/>
</dbReference>
<dbReference type="SMART" id="SM00408">
    <property type="entry name" value="IGc2"/>
    <property type="match status" value="2"/>
</dbReference>
<dbReference type="SMART" id="SM00406">
    <property type="entry name" value="IGv"/>
    <property type="match status" value="2"/>
</dbReference>
<dbReference type="SUPFAM" id="SSF48726">
    <property type="entry name" value="Immunoglobulin"/>
    <property type="match status" value="2"/>
</dbReference>
<dbReference type="PROSITE" id="PS50835">
    <property type="entry name" value="IG_LIKE"/>
    <property type="match status" value="2"/>
</dbReference>
<gene>
    <name type="primary">F11r</name>
    <name type="synonym">Jam1</name>
    <name type="synonym">Jcam</name>
    <name type="synonym">Jcam1</name>
</gene>
<evidence type="ECO:0000250" key="1">
    <source>
        <dbReference type="UniProtKB" id="Q9Y624"/>
    </source>
</evidence>
<evidence type="ECO:0000255" key="2"/>
<evidence type="ECO:0000269" key="3">
    <source>
    </source>
</evidence>
<evidence type="ECO:0000269" key="4">
    <source>
    </source>
</evidence>
<evidence type="ECO:0000269" key="5">
    <source>
    </source>
</evidence>
<evidence type="ECO:0000269" key="6">
    <source>
    </source>
</evidence>
<evidence type="ECO:0000269" key="7">
    <source>
    </source>
</evidence>
<evidence type="ECO:0000269" key="8">
    <source>
    </source>
</evidence>
<evidence type="ECO:0000305" key="9"/>
<evidence type="ECO:0007744" key="10">
    <source>
        <dbReference type="PDB" id="1F97"/>
    </source>
</evidence>
<evidence type="ECO:0007744" key="11">
    <source>
    </source>
</evidence>
<evidence type="ECO:0007744" key="12">
    <source>
    </source>
</evidence>
<evidence type="ECO:0007829" key="13">
    <source>
        <dbReference type="PDB" id="1F97"/>
    </source>
</evidence>
<proteinExistence type="evidence at protein level"/>
<protein>
    <recommendedName>
        <fullName>Junctional adhesion molecule A</fullName>
        <shortName>JAM-A</shortName>
    </recommendedName>
    <alternativeName>
        <fullName>Junctional adhesion molecule 1</fullName>
        <shortName>JAM-1</shortName>
    </alternativeName>
    <cdAntigenName>CD321</cdAntigenName>
</protein>
<organism>
    <name type="scientific">Mus musculus</name>
    <name type="common">Mouse</name>
    <dbReference type="NCBI Taxonomy" id="10090"/>
    <lineage>
        <taxon>Eukaryota</taxon>
        <taxon>Metazoa</taxon>
        <taxon>Chordata</taxon>
        <taxon>Craniata</taxon>
        <taxon>Vertebrata</taxon>
        <taxon>Euteleostomi</taxon>
        <taxon>Mammalia</taxon>
        <taxon>Eutheria</taxon>
        <taxon>Euarchontoglires</taxon>
        <taxon>Glires</taxon>
        <taxon>Rodentia</taxon>
        <taxon>Myomorpha</taxon>
        <taxon>Muroidea</taxon>
        <taxon>Muridae</taxon>
        <taxon>Murinae</taxon>
        <taxon>Mus</taxon>
        <taxon>Mus</taxon>
    </lineage>
</organism>
<keyword id="KW-0002">3D-structure</keyword>
<keyword id="KW-0965">Cell junction</keyword>
<keyword id="KW-1003">Cell membrane</keyword>
<keyword id="KW-1015">Disulfide bond</keyword>
<keyword id="KW-0325">Glycoprotein</keyword>
<keyword id="KW-0393">Immunoglobulin domain</keyword>
<keyword id="KW-0472">Membrane</keyword>
<keyword id="KW-0597">Phosphoprotein</keyword>
<keyword id="KW-1185">Reference proteome</keyword>
<keyword id="KW-0677">Repeat</keyword>
<keyword id="KW-0732">Signal</keyword>
<keyword id="KW-0796">Tight junction</keyword>
<keyword id="KW-0812">Transmembrane</keyword>
<keyword id="KW-1133">Transmembrane helix</keyword>
<feature type="signal peptide" evidence="2">
    <location>
        <begin position="1"/>
        <end position="26"/>
    </location>
</feature>
<feature type="chain" id="PRO_0000015067" description="Junctional adhesion molecule A">
    <location>
        <begin position="27"/>
        <end position="300"/>
    </location>
</feature>
<feature type="topological domain" description="Extracellular" evidence="2">
    <location>
        <begin position="27"/>
        <end position="238"/>
    </location>
</feature>
<feature type="transmembrane region" description="Helical" evidence="2">
    <location>
        <begin position="239"/>
        <end position="259"/>
    </location>
</feature>
<feature type="topological domain" description="Cytoplasmic" evidence="2">
    <location>
        <begin position="260"/>
        <end position="299"/>
    </location>
</feature>
<feature type="domain" description="Ig-like V-type 1">
    <location>
        <begin position="28"/>
        <end position="122"/>
    </location>
</feature>
<feature type="domain" description="Ig-like V-type 2">
    <location>
        <begin position="134"/>
        <end position="230"/>
    </location>
</feature>
<feature type="modified residue" description="Phosphoserine" evidence="1">
    <location>
        <position position="282"/>
    </location>
</feature>
<feature type="modified residue" description="Phosphoserine" evidence="12">
    <location>
        <position position="285"/>
    </location>
</feature>
<feature type="modified residue" description="Phosphoserine" evidence="11 12">
    <location>
        <position position="288"/>
    </location>
</feature>
<feature type="glycosylation site" description="N-linked (GlcNAc...) asparagine" evidence="6">
    <location>
        <position position="42"/>
    </location>
</feature>
<feature type="glycosylation site" description="N-linked (GlcNAc...) asparagine" evidence="6 7">
    <location>
        <position position="185"/>
    </location>
</feature>
<feature type="disulfide bond" evidence="5 10">
    <location>
        <begin position="49"/>
        <end position="108"/>
    </location>
</feature>
<feature type="disulfide bond" evidence="5 10">
    <location>
        <begin position="152"/>
        <end position="212"/>
    </location>
</feature>
<feature type="sequence conflict" description="In Ref. 1; AAC32982." evidence="9" ref="1">
    <original>R</original>
    <variation>T</variation>
    <location>
        <position position="268"/>
    </location>
</feature>
<feature type="strand" evidence="13">
    <location>
        <begin position="29"/>
        <end position="31"/>
    </location>
</feature>
<feature type="strand" evidence="13">
    <location>
        <begin position="35"/>
        <end position="40"/>
    </location>
</feature>
<feature type="strand" evidence="13">
    <location>
        <begin position="45"/>
        <end position="48"/>
    </location>
</feature>
<feature type="strand" evidence="13">
    <location>
        <begin position="50"/>
        <end position="53"/>
    </location>
</feature>
<feature type="strand" evidence="13">
    <location>
        <begin position="55"/>
        <end position="65"/>
    </location>
</feature>
<feature type="strand" evidence="13">
    <location>
        <begin position="68"/>
        <end position="74"/>
    </location>
</feature>
<feature type="helix" evidence="13">
    <location>
        <begin position="80"/>
        <end position="82"/>
    </location>
</feature>
<feature type="turn" evidence="13">
    <location>
        <begin position="83"/>
        <end position="85"/>
    </location>
</feature>
<feature type="strand" evidence="13">
    <location>
        <begin position="86"/>
        <end position="89"/>
    </location>
</feature>
<feature type="strand" evidence="13">
    <location>
        <begin position="92"/>
        <end position="96"/>
    </location>
</feature>
<feature type="helix" evidence="13">
    <location>
        <begin position="100"/>
        <end position="102"/>
    </location>
</feature>
<feature type="strand" evidence="13">
    <location>
        <begin position="104"/>
        <end position="112"/>
    </location>
</feature>
<feature type="strand" evidence="13">
    <location>
        <begin position="115"/>
        <end position="129"/>
    </location>
</feature>
<feature type="strand" evidence="13">
    <location>
        <begin position="135"/>
        <end position="137"/>
    </location>
</feature>
<feature type="strand" evidence="13">
    <location>
        <begin position="140"/>
        <end position="143"/>
    </location>
</feature>
<feature type="strand" evidence="13">
    <location>
        <begin position="148"/>
        <end position="153"/>
    </location>
</feature>
<feature type="strand" evidence="13">
    <location>
        <begin position="162"/>
        <end position="167"/>
    </location>
</feature>
<feature type="strand" evidence="13">
    <location>
        <begin position="170"/>
        <end position="173"/>
    </location>
</feature>
<feature type="strand" evidence="13">
    <location>
        <begin position="184"/>
        <end position="186"/>
    </location>
</feature>
<feature type="strand" evidence="13">
    <location>
        <begin position="188"/>
        <end position="190"/>
    </location>
</feature>
<feature type="turn" evidence="13">
    <location>
        <begin position="192"/>
        <end position="194"/>
    </location>
</feature>
<feature type="strand" evidence="13">
    <location>
        <begin position="197"/>
        <end position="201"/>
    </location>
</feature>
<feature type="helix" evidence="13">
    <location>
        <begin position="204"/>
        <end position="206"/>
    </location>
</feature>
<feature type="strand" evidence="13">
    <location>
        <begin position="208"/>
        <end position="215"/>
    </location>
</feature>
<feature type="strand" evidence="13">
    <location>
        <begin position="217"/>
        <end position="219"/>
    </location>
</feature>
<feature type="strand" evidence="13">
    <location>
        <begin position="227"/>
        <end position="234"/>
    </location>
</feature>
<comment type="function">
    <text evidence="1 4 8">Seems to play a role in epithelial tight junction formation. Appears early in primordial forms of cell junctions and recruits PARD3 (PubMed:11447115). The association of the PARD6-PARD3 complex may prevent the interaction of PARD3 with JAM1, thereby preventing tight junction assembly (PubMed:11447115). Plays a role in regulating monocyte transmigration involved in integrity of epithelial barrier (PubMed:9660867). Ligand for integrin alpha-L/beta-2 involved in memory T-cell and neutrophil transmigration (By similarity). Involved in platelet activation (By similarity).</text>
</comment>
<comment type="subunit">
    <text evidence="1 4">Interacts with the ninth PDZ domain of MPDZ (By similarity). Interacts with the first PDZ domain of PARD3 (PubMed:11447115). The association between PARD3 and PARD6B probably disrupts this interaction (PubMed:11447115). Interacts with ITGAL (via I-domain) (By similarity). Interacts with CD151 (By similarity).</text>
</comment>
<comment type="subcellular location">
    <subcellularLocation>
        <location evidence="3">Cell junction</location>
        <location evidence="3">Tight junction</location>
    </subcellularLocation>
    <subcellularLocation>
        <location evidence="3">Cell membrane</location>
        <topology evidence="3">Single-pass type I membrane protein</topology>
    </subcellularLocation>
    <text>Localized at tight junctions of both epithelial and endothelial cells.</text>
</comment>
<comment type="domain">
    <text evidence="1">The Ig-like V-type 2 domain is necessary and sufficient for interaction with integrin alpha-L/beta-2.</text>
</comment>
<comment type="similarity">
    <text evidence="9">Belongs to the immunoglobulin superfamily.</text>
</comment>
<name>JAM1_MOUSE</name>
<accession>O88792</accession>
<accession>Q8VC39</accession>
<reference key="1">
    <citation type="journal article" date="1998" name="J. Cell Biol.">
        <title>Junctional adhesion molecule, a novel member of the immunoglobulin superfamily that distributes at intercellular junctions and modulates monocyte transmigration.</title>
        <authorList>
            <person name="Martin-Padura I."/>
            <person name="Lostaglio S."/>
            <person name="Schneemann M."/>
            <person name="Williams L."/>
            <person name="Romano M."/>
            <person name="Fruscella P."/>
            <person name="Panzeri C."/>
            <person name="Stoppacciaro A."/>
            <person name="Ruco L."/>
            <person name="Villa A."/>
            <person name="Simmons D."/>
            <person name="Dejana E."/>
        </authorList>
    </citation>
    <scope>NUCLEOTIDE SEQUENCE [MRNA]</scope>
    <scope>FUNCTION</scope>
</reference>
<reference key="2">
    <citation type="journal article" date="2005" name="Science">
        <title>The transcriptional landscape of the mammalian genome.</title>
        <authorList>
            <person name="Carninci P."/>
            <person name="Kasukawa T."/>
            <person name="Katayama S."/>
            <person name="Gough J."/>
            <person name="Frith M.C."/>
            <person name="Maeda N."/>
            <person name="Oyama R."/>
            <person name="Ravasi T."/>
            <person name="Lenhard B."/>
            <person name="Wells C."/>
            <person name="Kodzius R."/>
            <person name="Shimokawa K."/>
            <person name="Bajic V.B."/>
            <person name="Brenner S.E."/>
            <person name="Batalov S."/>
            <person name="Forrest A.R."/>
            <person name="Zavolan M."/>
            <person name="Davis M.J."/>
            <person name="Wilming L.G."/>
            <person name="Aidinis V."/>
            <person name="Allen J.E."/>
            <person name="Ambesi-Impiombato A."/>
            <person name="Apweiler R."/>
            <person name="Aturaliya R.N."/>
            <person name="Bailey T.L."/>
            <person name="Bansal M."/>
            <person name="Baxter L."/>
            <person name="Beisel K.W."/>
            <person name="Bersano T."/>
            <person name="Bono H."/>
            <person name="Chalk A.M."/>
            <person name="Chiu K.P."/>
            <person name="Choudhary V."/>
            <person name="Christoffels A."/>
            <person name="Clutterbuck D.R."/>
            <person name="Crowe M.L."/>
            <person name="Dalla E."/>
            <person name="Dalrymple B.P."/>
            <person name="de Bono B."/>
            <person name="Della Gatta G."/>
            <person name="di Bernardo D."/>
            <person name="Down T."/>
            <person name="Engstrom P."/>
            <person name="Fagiolini M."/>
            <person name="Faulkner G."/>
            <person name="Fletcher C.F."/>
            <person name="Fukushima T."/>
            <person name="Furuno M."/>
            <person name="Futaki S."/>
            <person name="Gariboldi M."/>
            <person name="Georgii-Hemming P."/>
            <person name="Gingeras T.R."/>
            <person name="Gojobori T."/>
            <person name="Green R.E."/>
            <person name="Gustincich S."/>
            <person name="Harbers M."/>
            <person name="Hayashi Y."/>
            <person name="Hensch T.K."/>
            <person name="Hirokawa N."/>
            <person name="Hill D."/>
            <person name="Huminiecki L."/>
            <person name="Iacono M."/>
            <person name="Ikeo K."/>
            <person name="Iwama A."/>
            <person name="Ishikawa T."/>
            <person name="Jakt M."/>
            <person name="Kanapin A."/>
            <person name="Katoh M."/>
            <person name="Kawasawa Y."/>
            <person name="Kelso J."/>
            <person name="Kitamura H."/>
            <person name="Kitano H."/>
            <person name="Kollias G."/>
            <person name="Krishnan S.P."/>
            <person name="Kruger A."/>
            <person name="Kummerfeld S.K."/>
            <person name="Kurochkin I.V."/>
            <person name="Lareau L.F."/>
            <person name="Lazarevic D."/>
            <person name="Lipovich L."/>
            <person name="Liu J."/>
            <person name="Liuni S."/>
            <person name="McWilliam S."/>
            <person name="Madan Babu M."/>
            <person name="Madera M."/>
            <person name="Marchionni L."/>
            <person name="Matsuda H."/>
            <person name="Matsuzawa S."/>
            <person name="Miki H."/>
            <person name="Mignone F."/>
            <person name="Miyake S."/>
            <person name="Morris K."/>
            <person name="Mottagui-Tabar S."/>
            <person name="Mulder N."/>
            <person name="Nakano N."/>
            <person name="Nakauchi H."/>
            <person name="Ng P."/>
            <person name="Nilsson R."/>
            <person name="Nishiguchi S."/>
            <person name="Nishikawa S."/>
            <person name="Nori F."/>
            <person name="Ohara O."/>
            <person name="Okazaki Y."/>
            <person name="Orlando V."/>
            <person name="Pang K.C."/>
            <person name="Pavan W.J."/>
            <person name="Pavesi G."/>
            <person name="Pesole G."/>
            <person name="Petrovsky N."/>
            <person name="Piazza S."/>
            <person name="Reed J."/>
            <person name="Reid J.F."/>
            <person name="Ring B.Z."/>
            <person name="Ringwald M."/>
            <person name="Rost B."/>
            <person name="Ruan Y."/>
            <person name="Salzberg S.L."/>
            <person name="Sandelin A."/>
            <person name="Schneider C."/>
            <person name="Schoenbach C."/>
            <person name="Sekiguchi K."/>
            <person name="Semple C.A."/>
            <person name="Seno S."/>
            <person name="Sessa L."/>
            <person name="Sheng Y."/>
            <person name="Shibata Y."/>
            <person name="Shimada H."/>
            <person name="Shimada K."/>
            <person name="Silva D."/>
            <person name="Sinclair B."/>
            <person name="Sperling S."/>
            <person name="Stupka E."/>
            <person name="Sugiura K."/>
            <person name="Sultana R."/>
            <person name="Takenaka Y."/>
            <person name="Taki K."/>
            <person name="Tammoja K."/>
            <person name="Tan S.L."/>
            <person name="Tang S."/>
            <person name="Taylor M.S."/>
            <person name="Tegner J."/>
            <person name="Teichmann S.A."/>
            <person name="Ueda H.R."/>
            <person name="van Nimwegen E."/>
            <person name="Verardo R."/>
            <person name="Wei C.L."/>
            <person name="Yagi K."/>
            <person name="Yamanishi H."/>
            <person name="Zabarovsky E."/>
            <person name="Zhu S."/>
            <person name="Zimmer A."/>
            <person name="Hide W."/>
            <person name="Bult C."/>
            <person name="Grimmond S.M."/>
            <person name="Teasdale R.D."/>
            <person name="Liu E.T."/>
            <person name="Brusic V."/>
            <person name="Quackenbush J."/>
            <person name="Wahlestedt C."/>
            <person name="Mattick J.S."/>
            <person name="Hume D.A."/>
            <person name="Kai C."/>
            <person name="Sasaki D."/>
            <person name="Tomaru Y."/>
            <person name="Fukuda S."/>
            <person name="Kanamori-Katayama M."/>
            <person name="Suzuki M."/>
            <person name="Aoki J."/>
            <person name="Arakawa T."/>
            <person name="Iida J."/>
            <person name="Imamura K."/>
            <person name="Itoh M."/>
            <person name="Kato T."/>
            <person name="Kawaji H."/>
            <person name="Kawagashira N."/>
            <person name="Kawashima T."/>
            <person name="Kojima M."/>
            <person name="Kondo S."/>
            <person name="Konno H."/>
            <person name="Nakano K."/>
            <person name="Ninomiya N."/>
            <person name="Nishio T."/>
            <person name="Okada M."/>
            <person name="Plessy C."/>
            <person name="Shibata K."/>
            <person name="Shiraki T."/>
            <person name="Suzuki S."/>
            <person name="Tagami M."/>
            <person name="Waki K."/>
            <person name="Watahiki A."/>
            <person name="Okamura-Oho Y."/>
            <person name="Suzuki H."/>
            <person name="Kawai J."/>
            <person name="Hayashizaki Y."/>
        </authorList>
    </citation>
    <scope>NUCLEOTIDE SEQUENCE [LARGE SCALE MRNA]</scope>
    <source>
        <strain>C57BL/6J</strain>
        <tissue>Cecum</tissue>
    </source>
</reference>
<reference key="3">
    <citation type="submission" date="2005-07" db="EMBL/GenBank/DDBJ databases">
        <title>Cloning of mouse full open reading frames in Gateway(R) system entry vector (pDONR201).</title>
        <authorList>
            <person name="Ebert L."/>
            <person name="Muenstermann E."/>
            <person name="Schatten R."/>
            <person name="Henze S."/>
            <person name="Bohn E."/>
            <person name="Mollenhauer J."/>
            <person name="Wiemann S."/>
            <person name="Schick M."/>
            <person name="Korn B."/>
        </authorList>
    </citation>
    <scope>NUCLEOTIDE SEQUENCE [LARGE SCALE MRNA]</scope>
</reference>
<reference key="4">
    <citation type="journal article" date="2009" name="PLoS Biol.">
        <title>Lineage-specific biology revealed by a finished genome assembly of the mouse.</title>
        <authorList>
            <person name="Church D.M."/>
            <person name="Goodstadt L."/>
            <person name="Hillier L.W."/>
            <person name="Zody M.C."/>
            <person name="Goldstein S."/>
            <person name="She X."/>
            <person name="Bult C.J."/>
            <person name="Agarwala R."/>
            <person name="Cherry J.L."/>
            <person name="DiCuccio M."/>
            <person name="Hlavina W."/>
            <person name="Kapustin Y."/>
            <person name="Meric P."/>
            <person name="Maglott D."/>
            <person name="Birtle Z."/>
            <person name="Marques A.C."/>
            <person name="Graves T."/>
            <person name="Zhou S."/>
            <person name="Teague B."/>
            <person name="Potamousis K."/>
            <person name="Churas C."/>
            <person name="Place M."/>
            <person name="Herschleb J."/>
            <person name="Runnheim R."/>
            <person name="Forrest D."/>
            <person name="Amos-Landgraf J."/>
            <person name="Schwartz D.C."/>
            <person name="Cheng Z."/>
            <person name="Lindblad-Toh K."/>
            <person name="Eichler E.E."/>
            <person name="Ponting C.P."/>
        </authorList>
    </citation>
    <scope>NUCLEOTIDE SEQUENCE [LARGE SCALE GENOMIC DNA]</scope>
    <source>
        <strain>C57BL/6J</strain>
    </source>
</reference>
<reference key="5">
    <citation type="journal article" date="2004" name="Genome Res.">
        <title>The status, quality, and expansion of the NIH full-length cDNA project: the Mammalian Gene Collection (MGC).</title>
        <authorList>
            <consortium name="The MGC Project Team"/>
        </authorList>
    </citation>
    <scope>NUCLEOTIDE SEQUENCE [LARGE SCALE MRNA]</scope>
    <source>
        <strain>FVB/N</strain>
        <tissue>Mammary tumor</tissue>
    </source>
</reference>
<reference key="6">
    <citation type="journal article" date="2000" name="Curr. Top. Microbiol. Immunol.">
        <title>Cloning of JAM-2 and JAM-3: an emerging junctional adhesion molecular family?</title>
        <authorList>
            <person name="Aurrand-Lions M.A."/>
            <person name="Duncan L."/>
            <person name="Du Pasquier L."/>
            <person name="Imhof B.A."/>
        </authorList>
    </citation>
    <scope>SUBCELLULAR LOCATION</scope>
</reference>
<reference key="7">
    <citation type="journal article" date="2001" name="EMBO J.">
        <title>The cell polarity protein ASIP/PAR-3 directly associates with junctional adhesion molecule (JAM).</title>
        <authorList>
            <person name="Ebnet K."/>
            <person name="Suzuki A."/>
            <person name="Horikoshi Y."/>
            <person name="Hirose T."/>
            <person name="Meyer zu Brickwedde M.-K."/>
            <person name="Ohno S."/>
            <person name="Vestweber D."/>
        </authorList>
    </citation>
    <scope>INTERACTION WITH PARD3</scope>
</reference>
<reference key="8">
    <citation type="journal article" date="2003" name="Trends Immunol.">
        <title>Leukocyte-endothelial-cell interactions in leukocyte transmigration and the inflammatory response.</title>
        <authorList>
            <person name="Muller W.A."/>
        </authorList>
    </citation>
    <scope>REVIEW</scope>
    <scope>NOMENCLATURE</scope>
</reference>
<reference key="9">
    <citation type="journal article" date="2007" name="Proc. Natl. Acad. Sci. U.S.A.">
        <title>Large-scale phosphorylation analysis of mouse liver.</title>
        <authorList>
            <person name="Villen J."/>
            <person name="Beausoleil S.A."/>
            <person name="Gerber S.A."/>
            <person name="Gygi S.P."/>
        </authorList>
    </citation>
    <scope>PHOSPHORYLATION [LARGE SCALE ANALYSIS] AT SER-288</scope>
    <scope>IDENTIFICATION BY MASS SPECTROMETRY [LARGE SCALE ANALYSIS]</scope>
    <source>
        <tissue>Liver</tissue>
    </source>
</reference>
<reference key="10">
    <citation type="journal article" date="2009" name="Mol. Cell. Proteomics">
        <title>The mouse C2C12 myoblast cell surface N-linked glycoproteome: identification, glycosite occupancy, and membrane orientation.</title>
        <authorList>
            <person name="Gundry R.L."/>
            <person name="Raginski K."/>
            <person name="Tarasova Y."/>
            <person name="Tchernyshyov I."/>
            <person name="Bausch-Fluck D."/>
            <person name="Elliott S.T."/>
            <person name="Boheler K.R."/>
            <person name="Van Eyk J.E."/>
            <person name="Wollscheid B."/>
        </authorList>
    </citation>
    <scope>GLYCOSYLATION [LARGE SCALE ANALYSIS] AT ASN-185</scope>
    <source>
        <tissue>Myoblast</tissue>
    </source>
</reference>
<reference key="11">
    <citation type="journal article" date="2009" name="Nat. Biotechnol.">
        <title>Mass-spectrometric identification and relative quantification of N-linked cell surface glycoproteins.</title>
        <authorList>
            <person name="Wollscheid B."/>
            <person name="Bausch-Fluck D."/>
            <person name="Henderson C."/>
            <person name="O'Brien R."/>
            <person name="Bibel M."/>
            <person name="Schiess R."/>
            <person name="Aebersold R."/>
            <person name="Watts J.D."/>
        </authorList>
    </citation>
    <scope>GLYCOSYLATION [LARGE SCALE ANALYSIS] AT ASN-42 AND ASN-185</scope>
</reference>
<reference key="12">
    <citation type="journal article" date="2010" name="Cell">
        <title>A tissue-specific atlas of mouse protein phosphorylation and expression.</title>
        <authorList>
            <person name="Huttlin E.L."/>
            <person name="Jedrychowski M.P."/>
            <person name="Elias J.E."/>
            <person name="Goswami T."/>
            <person name="Rad R."/>
            <person name="Beausoleil S.A."/>
            <person name="Villen J."/>
            <person name="Haas W."/>
            <person name="Sowa M.E."/>
            <person name="Gygi S.P."/>
        </authorList>
    </citation>
    <scope>PHOSPHORYLATION [LARGE SCALE ANALYSIS] AT SER-285 AND SER-288</scope>
    <scope>IDENTIFICATION BY MASS SPECTROMETRY [LARGE SCALE ANALYSIS]</scope>
    <source>
        <tissue>Brown adipose tissue</tissue>
        <tissue>Heart</tissue>
        <tissue>Kidney</tissue>
        <tissue>Liver</tissue>
        <tissue>Lung</tissue>
        <tissue>Pancreas</tissue>
        <tissue>Testis</tissue>
    </source>
</reference>
<reference key="13">
    <citation type="journal article" date="2001" name="EMBO J.">
        <title>X-ray structure of junctional adhesion molecule: structural basis for homophilic adhesion via a novel dimerization motif.</title>
        <authorList>
            <person name="Kostrewa D."/>
            <person name="Brockhaus M."/>
            <person name="D'Arcy A."/>
            <person name="Dale G.E."/>
            <person name="Nelboeck P."/>
            <person name="Schmid G."/>
            <person name="Mueller F."/>
            <person name="Bazzoni G."/>
            <person name="Dejana E."/>
            <person name="Bartfai T."/>
            <person name="Winkler F.K."/>
            <person name="Hennig M."/>
        </authorList>
    </citation>
    <scope>X-RAY CRYSTALLOGRAPHY (2.50 ANGSTROMS) OF 27-238</scope>
    <scope>DISULFIDE BONDS</scope>
</reference>